<protein>
    <recommendedName>
        <fullName>Protein HP_1247</fullName>
    </recommendedName>
</protein>
<proteinExistence type="evidence at protein level"/>
<keyword id="KW-0235">DNA replication</keyword>
<keyword id="KW-0239">DNA-directed DNA polymerase</keyword>
<keyword id="KW-0548">Nucleotidyltransferase</keyword>
<keyword id="KW-1185">Reference proteome</keyword>
<keyword id="KW-0808">Transferase</keyword>
<sequence length="340" mass="39490">MYRKDLDHYLKQRLPKAVFLYGEFDFFIHYYIQTISALFKCDNPDIETSLFYASDYEKSQIATLLEQDSLFGGSSLVVLKLDFALHKKFKENDINLFLKALERPSHNRLIIGLYNAKSDTTKYKYTSDAIVKFFQKSPLKDEAICARFFIPKTWESLKFLQERANFLHLDISGHLLNALFEINNEDLGVSFNDLDKLAVLNAPITLEDIQELSSNAGDMDLQKLILGLFLKKSALDIYDYLLKEGKKDADILRGLERYFYQLFLFFAHIKTTGLMDAKEVLGYAPPKEIAENYAKNALRLKEAGYKRVFEIFRLWHIQSMQGQKELGFLYLTSIQKIINP</sequence>
<reference key="1">
    <citation type="journal article" date="1997" name="Nature">
        <title>The complete genome sequence of the gastric pathogen Helicobacter pylori.</title>
        <authorList>
            <person name="Tomb J.-F."/>
            <person name="White O."/>
            <person name="Kerlavage A.R."/>
            <person name="Clayton R.A."/>
            <person name="Sutton G.G."/>
            <person name="Fleischmann R.D."/>
            <person name="Ketchum K.A."/>
            <person name="Klenk H.-P."/>
            <person name="Gill S.R."/>
            <person name="Dougherty B.A."/>
            <person name="Nelson K.E."/>
            <person name="Quackenbush J."/>
            <person name="Zhou L."/>
            <person name="Kirkness E.F."/>
            <person name="Peterson S.N."/>
            <person name="Loftus B.J."/>
            <person name="Richardson D.L."/>
            <person name="Dodson R.J."/>
            <person name="Khalak H.G."/>
            <person name="Glodek A."/>
            <person name="McKenney K."/>
            <person name="FitzGerald L.M."/>
            <person name="Lee N."/>
            <person name="Adams M.D."/>
            <person name="Hickey E.K."/>
            <person name="Berg D.E."/>
            <person name="Gocayne J.D."/>
            <person name="Utterback T.R."/>
            <person name="Peterson J.D."/>
            <person name="Kelley J.M."/>
            <person name="Cotton M.D."/>
            <person name="Weidman J.F."/>
            <person name="Fujii C."/>
            <person name="Bowman C."/>
            <person name="Watthey L."/>
            <person name="Wallin E."/>
            <person name="Hayes W.S."/>
            <person name="Borodovsky M."/>
            <person name="Karp P.D."/>
            <person name="Smith H.O."/>
            <person name="Fraser C.M."/>
            <person name="Venter J.C."/>
        </authorList>
    </citation>
    <scope>NUCLEOTIDE SEQUENCE [LARGE SCALE GENOMIC DNA]</scope>
    <source>
        <strain>ATCC 700392 / 26695</strain>
    </source>
</reference>
<reference key="2">
    <citation type="unpublished observations" date="2000-04">
        <authorList>
            <person name="Legrain P."/>
        </authorList>
    </citation>
    <scope>INTERACTION</scope>
</reference>
<dbReference type="EMBL" id="AE000511">
    <property type="protein sequence ID" value="AAD08299.1"/>
    <property type="molecule type" value="Genomic_DNA"/>
</dbReference>
<dbReference type="PIR" id="G64675">
    <property type="entry name" value="G64675"/>
</dbReference>
<dbReference type="RefSeq" id="NP_208039.1">
    <property type="nucleotide sequence ID" value="NC_000915.1"/>
</dbReference>
<dbReference type="SMR" id="O25842"/>
<dbReference type="DIP" id="DIP-3679N"/>
<dbReference type="IntAct" id="O25842">
    <property type="interactions" value="1"/>
</dbReference>
<dbReference type="MINT" id="O25842"/>
<dbReference type="STRING" id="85962.HP_1247"/>
<dbReference type="PaxDb" id="85962-C694_06445"/>
<dbReference type="DNASU" id="898813"/>
<dbReference type="EnsemblBacteria" id="AAD08299">
    <property type="protein sequence ID" value="AAD08299"/>
    <property type="gene ID" value="HP_1247"/>
</dbReference>
<dbReference type="KEGG" id="heo:C694_06445"/>
<dbReference type="KEGG" id="hpy:HP_1247"/>
<dbReference type="PATRIC" id="fig|85962.47.peg.1339"/>
<dbReference type="eggNOG" id="COG1466">
    <property type="taxonomic scope" value="Bacteria"/>
</dbReference>
<dbReference type="InParanoid" id="O25842"/>
<dbReference type="OrthoDB" id="5329738at2"/>
<dbReference type="Proteomes" id="UP000000429">
    <property type="component" value="Chromosome"/>
</dbReference>
<dbReference type="GO" id="GO:0009360">
    <property type="term" value="C:DNA polymerase III complex"/>
    <property type="evidence" value="ECO:0000318"/>
    <property type="project" value="GO_Central"/>
</dbReference>
<dbReference type="GO" id="GO:0003677">
    <property type="term" value="F:DNA binding"/>
    <property type="evidence" value="ECO:0007669"/>
    <property type="project" value="InterPro"/>
</dbReference>
<dbReference type="GO" id="GO:0003887">
    <property type="term" value="F:DNA-directed DNA polymerase activity"/>
    <property type="evidence" value="ECO:0007669"/>
    <property type="project" value="UniProtKB-KW"/>
</dbReference>
<dbReference type="GO" id="GO:0006261">
    <property type="term" value="P:DNA-templated DNA replication"/>
    <property type="evidence" value="ECO:0000318"/>
    <property type="project" value="GO_Central"/>
</dbReference>
<dbReference type="Gene3D" id="3.40.50.300">
    <property type="entry name" value="P-loop containing nucleotide triphosphate hydrolases"/>
    <property type="match status" value="1"/>
</dbReference>
<dbReference type="InterPro" id="IPR005790">
    <property type="entry name" value="DNA_polIII_delta"/>
</dbReference>
<dbReference type="InterPro" id="IPR027417">
    <property type="entry name" value="P-loop_NTPase"/>
</dbReference>
<dbReference type="NCBIfam" id="TIGR01128">
    <property type="entry name" value="holA"/>
    <property type="match status" value="1"/>
</dbReference>
<dbReference type="NCBIfam" id="NF006299">
    <property type="entry name" value="PRK08487.1-2"/>
    <property type="match status" value="1"/>
</dbReference>
<dbReference type="PANTHER" id="PTHR34388">
    <property type="entry name" value="DNA POLYMERASE III SUBUNIT DELTA"/>
    <property type="match status" value="1"/>
</dbReference>
<dbReference type="PANTHER" id="PTHR34388:SF1">
    <property type="entry name" value="DNA POLYMERASE III SUBUNIT DELTA"/>
    <property type="match status" value="1"/>
</dbReference>
<dbReference type="SUPFAM" id="SSF52540">
    <property type="entry name" value="P-loop containing nucleoside triphosphate hydrolases"/>
    <property type="match status" value="1"/>
</dbReference>
<feature type="chain" id="PRO_0000105507" description="Protein HP_1247">
    <location>
        <begin position="1"/>
        <end position="340"/>
    </location>
</feature>
<organism>
    <name type="scientific">Helicobacter pylori (strain ATCC 700392 / 26695)</name>
    <name type="common">Campylobacter pylori</name>
    <dbReference type="NCBI Taxonomy" id="85962"/>
    <lineage>
        <taxon>Bacteria</taxon>
        <taxon>Pseudomonadati</taxon>
        <taxon>Campylobacterota</taxon>
        <taxon>Epsilonproteobacteria</taxon>
        <taxon>Campylobacterales</taxon>
        <taxon>Helicobacteraceae</taxon>
        <taxon>Helicobacter</taxon>
    </lineage>
</organism>
<comment type="function">
    <text>Could be the functional equivalent of DNA polymerase III delta subunit (HolA).</text>
</comment>
<comment type="subunit">
    <text>Seems to interact with H.pylori HolB.</text>
</comment>
<comment type="interaction">
    <interactant intactId="EBI-527915">
        <id>O25842</id>
    </interactant>
    <interactant intactId="EBI-527926">
        <id>O25829</id>
        <label>HP_1231</label>
    </interactant>
    <organismsDiffer>false</organismsDiffer>
    <experiments>3</experiments>
</comment>
<name>Y1247_HELPY</name>
<gene>
    <name type="ordered locus">HP_1247</name>
</gene>
<accession>O25842</accession>